<name>SDHAB_XENLA</name>
<protein>
    <recommendedName>
        <fullName>Succinate dehydrogenase [ubiquinone] flavoprotein subunit B, mitochondrial</fullName>
        <ecNumber evidence="2">1.3.5.1</ecNumber>
    </recommendedName>
    <alternativeName>
        <fullName>Flavoprotein subunit of complex II B</fullName>
        <shortName>Fp</shortName>
    </alternativeName>
    <alternativeName>
        <fullName>Malate dehydrogenase [quinone] flavoprotein subunit</fullName>
        <ecNumber evidence="1">1.1.5.-</ecNumber>
    </alternativeName>
</protein>
<evidence type="ECO:0000250" key="1">
    <source>
        <dbReference type="UniProtKB" id="P31039"/>
    </source>
</evidence>
<evidence type="ECO:0000250" key="2">
    <source>
        <dbReference type="UniProtKB" id="P31040"/>
    </source>
</evidence>
<evidence type="ECO:0000250" key="3">
    <source>
        <dbReference type="UniProtKB" id="Q0QF01"/>
    </source>
</evidence>
<evidence type="ECO:0000250" key="4">
    <source>
        <dbReference type="UniProtKB" id="Q9YHT1"/>
    </source>
</evidence>
<evidence type="ECO:0000305" key="5"/>
<reference key="1">
    <citation type="submission" date="2003-02" db="EMBL/GenBank/DDBJ databases">
        <authorList>
            <consortium name="NIH - Xenopus Gene Collection (XGC) project"/>
        </authorList>
    </citation>
    <scope>NUCLEOTIDE SEQUENCE [LARGE SCALE MRNA]</scope>
    <source>
        <tissue>Embryo</tissue>
    </source>
</reference>
<sequence>MALLKVAPSRLLSRALQLTSTLQNCTATSIAARRNFHFTVYGRKDTSAKVSDSISTQYPVVDHDFDAVVVGAGGAGLRAAFGLSEAGFNTACITKLFPTRSHTVAAQGGINAALGNMEDDDWRWHFYDTVKGSDWLGDQDAIHYMTEQAPASVIELENYGMPFSRTEQGKIYQRAFGGQSLKYGKGGQAHRCCCVADRTGHSLLHTLYGRSLRYDTSYFVEYFALDLLMENGECRGVIALCMEDGSIHRFRAKNTVIATGGYGRTYFSCTSAHTCTGDGTAMVTRAGLPCQDLEFVQFHPTGIYGAGCLITEGCRGEGGILINSEGERFMERYAPVAKDLASRDVVSRSMTIEMREGRGCGKDKDHVYLQLHHLPPSQLASRLPGISETAMIFAGVDVTKEPIPVLPTVHYNMGGIPTNYKGQVITHVNGEDRVVPGLYACGEAASASVHGANRLGANSLLDLVVFGRACALSIAEECKPGEALPSIKENAGEESVANLDKLRFANGSTRTSELRLNMQKTMQTHAAVFRTGSVLKEGCEKLSVINSAMDDLKTFDRGIVWNTDVVETLELQNLMLCALQTINSAEARKESRGAHAREDYKTRIDEYDYSKPIQGQQKKSFSEHWRKHTLSYVDSKGKVSLEYRPVIDATLNEDCASVPPAIRSY</sequence>
<dbReference type="EC" id="1.3.5.1" evidence="2"/>
<dbReference type="EC" id="1.1.5.-" evidence="1"/>
<dbReference type="EMBL" id="BC047261">
    <property type="protein sequence ID" value="AAH47261.1"/>
    <property type="molecule type" value="mRNA"/>
</dbReference>
<dbReference type="RefSeq" id="NP_001080770.1">
    <property type="nucleotide sequence ID" value="NM_001087301.1"/>
</dbReference>
<dbReference type="SMR" id="Q801S2"/>
<dbReference type="DNASU" id="380463"/>
<dbReference type="GeneID" id="380463"/>
<dbReference type="KEGG" id="xla:380463"/>
<dbReference type="AGR" id="Xenbase:XB-GENE-956949"/>
<dbReference type="CTD" id="380463"/>
<dbReference type="Xenbase" id="XB-GENE-956949">
    <property type="gene designation" value="sdha.S"/>
</dbReference>
<dbReference type="OrthoDB" id="71672at2759"/>
<dbReference type="UniPathway" id="UPA00223">
    <property type="reaction ID" value="UER01006"/>
</dbReference>
<dbReference type="Proteomes" id="UP000186698">
    <property type="component" value="Chromosome 6S"/>
</dbReference>
<dbReference type="Bgee" id="380463">
    <property type="expression patterns" value="Expressed in muscle tissue and 19 other cell types or tissues"/>
</dbReference>
<dbReference type="GO" id="GO:0005743">
    <property type="term" value="C:mitochondrial inner membrane"/>
    <property type="evidence" value="ECO:0000250"/>
    <property type="project" value="UniProtKB"/>
</dbReference>
<dbReference type="GO" id="GO:0045273">
    <property type="term" value="C:respiratory chain complex II (succinate dehydrogenase)"/>
    <property type="evidence" value="ECO:0000318"/>
    <property type="project" value="GO_Central"/>
</dbReference>
<dbReference type="GO" id="GO:0009055">
    <property type="term" value="F:electron transfer activity"/>
    <property type="evidence" value="ECO:0000318"/>
    <property type="project" value="GO_Central"/>
</dbReference>
<dbReference type="GO" id="GO:0050660">
    <property type="term" value="F:flavin adenine dinucleotide binding"/>
    <property type="evidence" value="ECO:0000318"/>
    <property type="project" value="GO_Central"/>
</dbReference>
<dbReference type="GO" id="GO:0008177">
    <property type="term" value="F:succinate dehydrogenase (quinone) activity"/>
    <property type="evidence" value="ECO:0000250"/>
    <property type="project" value="UniProtKB"/>
</dbReference>
<dbReference type="GO" id="GO:0006121">
    <property type="term" value="P:mitochondrial electron transport, succinate to ubiquinone"/>
    <property type="evidence" value="ECO:0000318"/>
    <property type="project" value="GO_Central"/>
</dbReference>
<dbReference type="GO" id="GO:0006099">
    <property type="term" value="P:tricarboxylic acid cycle"/>
    <property type="evidence" value="ECO:0007669"/>
    <property type="project" value="UniProtKB-UniPathway"/>
</dbReference>
<dbReference type="FunFam" id="3.90.700.10:FF:000001">
    <property type="entry name" value="Mitochondrial succinate dehydrogenase flavoprotein subunit"/>
    <property type="match status" value="1"/>
</dbReference>
<dbReference type="FunFam" id="4.10.80.40:FF:000004">
    <property type="entry name" value="Succinate dehydrogenase [ubiquinone] flavoprotein subunit, mitochondrial"/>
    <property type="match status" value="1"/>
</dbReference>
<dbReference type="FunFam" id="3.50.50.60:FF:000482">
    <property type="entry name" value="Succinate dehydrogenase complex, subunit A, flavoprotein (Fp)"/>
    <property type="match status" value="1"/>
</dbReference>
<dbReference type="FunFam" id="3.50.50.60:FF:001062">
    <property type="entry name" value="Succinate dehydrogenase complex, subunit A, flavoprotein (Fp)"/>
    <property type="match status" value="1"/>
</dbReference>
<dbReference type="FunFam" id="1.20.58.100:FF:000001">
    <property type="entry name" value="Succinate dehydrogenase flavoprotein subunit (SdhA)"/>
    <property type="match status" value="1"/>
</dbReference>
<dbReference type="Gene3D" id="3.50.50.60">
    <property type="entry name" value="FAD/NAD(P)-binding domain"/>
    <property type="match status" value="1"/>
</dbReference>
<dbReference type="Gene3D" id="1.20.58.100">
    <property type="entry name" value="Fumarate reductase/succinate dehydrogenase flavoprotein-like, C-terminal domain"/>
    <property type="match status" value="1"/>
</dbReference>
<dbReference type="Gene3D" id="4.10.80.40">
    <property type="entry name" value="succinate dehydrogenase protein domain"/>
    <property type="match status" value="1"/>
</dbReference>
<dbReference type="Gene3D" id="3.90.700.10">
    <property type="entry name" value="Succinate dehydrogenase/fumarate reductase flavoprotein, catalytic domain"/>
    <property type="match status" value="1"/>
</dbReference>
<dbReference type="InterPro" id="IPR003953">
    <property type="entry name" value="FAD-dep_OxRdtase_2_FAD-bd"/>
</dbReference>
<dbReference type="InterPro" id="IPR036188">
    <property type="entry name" value="FAD/NAD-bd_sf"/>
</dbReference>
<dbReference type="InterPro" id="IPR003952">
    <property type="entry name" value="FRD_SDH_FAD_BS"/>
</dbReference>
<dbReference type="InterPro" id="IPR037099">
    <property type="entry name" value="Fum_R/Succ_DH_flav-like_C_sf"/>
</dbReference>
<dbReference type="InterPro" id="IPR015939">
    <property type="entry name" value="Fum_Rdtase/Succ_DH_flav-like_C"/>
</dbReference>
<dbReference type="InterPro" id="IPR030664">
    <property type="entry name" value="SdhA/FrdA/AprA"/>
</dbReference>
<dbReference type="InterPro" id="IPR027477">
    <property type="entry name" value="Succ_DH/fumarate_Rdtase_cat_sf"/>
</dbReference>
<dbReference type="InterPro" id="IPR011281">
    <property type="entry name" value="Succ_DH_flav_su_fwd"/>
</dbReference>
<dbReference type="InterPro" id="IPR014006">
    <property type="entry name" value="Succ_Dhase_FrdA_Gneg"/>
</dbReference>
<dbReference type="NCBIfam" id="TIGR01816">
    <property type="entry name" value="sdhA_forward"/>
    <property type="match status" value="1"/>
</dbReference>
<dbReference type="NCBIfam" id="TIGR01812">
    <property type="entry name" value="sdhA_frdA_Gneg"/>
    <property type="match status" value="1"/>
</dbReference>
<dbReference type="PANTHER" id="PTHR11632">
    <property type="entry name" value="SUCCINATE DEHYDROGENASE 2 FLAVOPROTEIN SUBUNIT"/>
    <property type="match status" value="1"/>
</dbReference>
<dbReference type="PANTHER" id="PTHR11632:SF51">
    <property type="entry name" value="SUCCINATE DEHYDROGENASE [UBIQUINONE] FLAVOPROTEIN SUBUNIT, MITOCHONDRIAL"/>
    <property type="match status" value="1"/>
</dbReference>
<dbReference type="Pfam" id="PF00890">
    <property type="entry name" value="FAD_binding_2"/>
    <property type="match status" value="1"/>
</dbReference>
<dbReference type="Pfam" id="PF02910">
    <property type="entry name" value="Succ_DH_flav_C"/>
    <property type="match status" value="1"/>
</dbReference>
<dbReference type="PIRSF" id="PIRSF000171">
    <property type="entry name" value="SDHA_APRA_LASPO"/>
    <property type="match status" value="1"/>
</dbReference>
<dbReference type="SUPFAM" id="SSF51905">
    <property type="entry name" value="FAD/NAD(P)-binding domain"/>
    <property type="match status" value="1"/>
</dbReference>
<dbReference type="SUPFAM" id="SSF46977">
    <property type="entry name" value="Succinate dehydrogenase/fumarate reductase flavoprotein C-terminal domain"/>
    <property type="match status" value="1"/>
</dbReference>
<dbReference type="SUPFAM" id="SSF56425">
    <property type="entry name" value="Succinate dehydrogenase/fumarate reductase flavoprotein, catalytic domain"/>
    <property type="match status" value="1"/>
</dbReference>
<dbReference type="PROSITE" id="PS00504">
    <property type="entry name" value="FRD_SDH_FAD_BINDING"/>
    <property type="match status" value="1"/>
</dbReference>
<feature type="transit peptide" description="Mitochondrion" evidence="3">
    <location>
        <begin position="1"/>
        <end position="45"/>
    </location>
</feature>
<feature type="chain" id="PRO_0000272306" description="Succinate dehydrogenase [ubiquinone] flavoprotein subunit B, mitochondrial">
    <location>
        <begin position="46"/>
        <end position="665"/>
    </location>
</feature>
<feature type="active site" description="Proton acceptor" evidence="4">
    <location>
        <position position="343"/>
    </location>
</feature>
<feature type="binding site" evidence="2">
    <location>
        <position position="72"/>
    </location>
    <ligand>
        <name>FAD</name>
        <dbReference type="ChEBI" id="CHEBI:57692"/>
    </ligand>
</feature>
<feature type="binding site" evidence="2">
    <location>
        <position position="75"/>
    </location>
    <ligand>
        <name>FAD</name>
        <dbReference type="ChEBI" id="CHEBI:57692"/>
    </ligand>
</feature>
<feature type="binding site" evidence="2">
    <location>
        <position position="94"/>
    </location>
    <ligand>
        <name>FAD</name>
        <dbReference type="ChEBI" id="CHEBI:57692"/>
    </ligand>
</feature>
<feature type="binding site" evidence="2">
    <location>
        <position position="95"/>
    </location>
    <ligand>
        <name>FAD</name>
        <dbReference type="ChEBI" id="CHEBI:57692"/>
    </ligand>
</feature>
<feature type="binding site" evidence="2">
    <location>
        <position position="101"/>
    </location>
    <ligand>
        <name>FAD</name>
        <dbReference type="ChEBI" id="CHEBI:57692"/>
    </ligand>
</feature>
<feature type="binding site" evidence="2">
    <location>
        <position position="103"/>
    </location>
    <ligand>
        <name>FAD</name>
        <dbReference type="ChEBI" id="CHEBI:57692"/>
    </ligand>
</feature>
<feature type="binding site" evidence="2">
    <location>
        <position position="108"/>
    </location>
    <ligand>
        <name>FAD</name>
        <dbReference type="ChEBI" id="CHEBI:57692"/>
    </ligand>
</feature>
<feature type="binding site" evidence="2">
    <location>
        <position position="224"/>
    </location>
    <ligand>
        <name>FAD</name>
        <dbReference type="ChEBI" id="CHEBI:57692"/>
    </ligand>
</feature>
<feature type="binding site" evidence="2">
    <location>
        <position position="278"/>
    </location>
    <ligand>
        <name>FAD</name>
        <dbReference type="ChEBI" id="CHEBI:57692"/>
    </ligand>
</feature>
<feature type="binding site" evidence="2">
    <location>
        <position position="299"/>
    </location>
    <ligand>
        <name>oxaloacetate</name>
        <dbReference type="ChEBI" id="CHEBI:16452"/>
    </ligand>
</feature>
<feature type="binding site" evidence="2">
    <location>
        <position position="343"/>
    </location>
    <ligand>
        <name>oxaloacetate</name>
        <dbReference type="ChEBI" id="CHEBI:16452"/>
    </ligand>
</feature>
<feature type="binding site" evidence="2">
    <location>
        <position position="410"/>
    </location>
    <ligand>
        <name>oxaloacetate</name>
        <dbReference type="ChEBI" id="CHEBI:16452"/>
    </ligand>
</feature>
<feature type="binding site" evidence="2">
    <location>
        <position position="443"/>
    </location>
    <ligand>
        <name>FAD</name>
        <dbReference type="ChEBI" id="CHEBI:57692"/>
    </ligand>
</feature>
<feature type="binding site" evidence="2">
    <location>
        <position position="454"/>
    </location>
    <ligand>
        <name>oxaloacetate</name>
        <dbReference type="ChEBI" id="CHEBI:16452"/>
    </ligand>
</feature>
<feature type="binding site" evidence="2">
    <location>
        <position position="457"/>
    </location>
    <ligand>
        <name>oxaloacetate</name>
        <dbReference type="ChEBI" id="CHEBI:16452"/>
    </ligand>
</feature>
<feature type="binding site" evidence="2">
    <location>
        <position position="459"/>
    </location>
    <ligand>
        <name>FAD</name>
        <dbReference type="ChEBI" id="CHEBI:57692"/>
    </ligand>
</feature>
<feature type="binding site" evidence="2">
    <location>
        <position position="460"/>
    </location>
    <ligand>
        <name>FAD</name>
        <dbReference type="ChEBI" id="CHEBI:57692"/>
    </ligand>
</feature>
<feature type="modified residue" description="Tele-8alpha-FAD histidine" evidence="4">
    <location>
        <position position="102"/>
    </location>
</feature>
<gene>
    <name type="primary">sdha-b</name>
</gene>
<proteinExistence type="evidence at transcript level"/>
<accession>Q801S2</accession>
<organism>
    <name type="scientific">Xenopus laevis</name>
    <name type="common">African clawed frog</name>
    <dbReference type="NCBI Taxonomy" id="8355"/>
    <lineage>
        <taxon>Eukaryota</taxon>
        <taxon>Metazoa</taxon>
        <taxon>Chordata</taxon>
        <taxon>Craniata</taxon>
        <taxon>Vertebrata</taxon>
        <taxon>Euteleostomi</taxon>
        <taxon>Amphibia</taxon>
        <taxon>Batrachia</taxon>
        <taxon>Anura</taxon>
        <taxon>Pipoidea</taxon>
        <taxon>Pipidae</taxon>
        <taxon>Xenopodinae</taxon>
        <taxon>Xenopus</taxon>
        <taxon>Xenopus</taxon>
    </lineage>
</organism>
<comment type="function">
    <text evidence="1 2">Flavoprotein (FP) subunit of succinate dehydrogenase (SDH) that is involved in complex II of the mitochondrial electron transport chain and is responsible for transferring electrons from succinate to ubiquinone (coenzyme Q) (By similarity). SDH also oxidizes malate to the non-canonical enol form of oxaloacetate, enol-oxaloacetate. Enol-oxaloacetate, which is a potent inhibitor of the succinate dehydrogenase activity, is further isomerized into keto-oxaloacetate (By similarity).</text>
</comment>
<comment type="catalytic activity">
    <reaction evidence="2">
        <text>a ubiquinone + succinate = a ubiquinol + fumarate</text>
        <dbReference type="Rhea" id="RHEA:13713"/>
        <dbReference type="Rhea" id="RHEA-COMP:9565"/>
        <dbReference type="Rhea" id="RHEA-COMP:9566"/>
        <dbReference type="ChEBI" id="CHEBI:16389"/>
        <dbReference type="ChEBI" id="CHEBI:17976"/>
        <dbReference type="ChEBI" id="CHEBI:29806"/>
        <dbReference type="ChEBI" id="CHEBI:30031"/>
        <dbReference type="EC" id="1.3.5.1"/>
    </reaction>
</comment>
<comment type="catalytic activity">
    <reaction evidence="1">
        <text>(R)-malate + a quinone = enol-oxaloacetate + a quinol</text>
        <dbReference type="Rhea" id="RHEA:79827"/>
        <dbReference type="ChEBI" id="CHEBI:15588"/>
        <dbReference type="ChEBI" id="CHEBI:17479"/>
        <dbReference type="ChEBI" id="CHEBI:24646"/>
        <dbReference type="ChEBI" id="CHEBI:132124"/>
    </reaction>
    <physiologicalReaction direction="left-to-right" evidence="1">
        <dbReference type="Rhea" id="RHEA:79828"/>
    </physiologicalReaction>
</comment>
<comment type="catalytic activity">
    <reaction evidence="1">
        <text>(S)-malate + a quinone = enol-oxaloacetate + a quinol</text>
        <dbReference type="Rhea" id="RHEA:79831"/>
        <dbReference type="ChEBI" id="CHEBI:15589"/>
        <dbReference type="ChEBI" id="CHEBI:17479"/>
        <dbReference type="ChEBI" id="CHEBI:24646"/>
        <dbReference type="ChEBI" id="CHEBI:132124"/>
    </reaction>
    <physiologicalReaction direction="left-to-right" evidence="1">
        <dbReference type="Rhea" id="RHEA:79832"/>
    </physiologicalReaction>
</comment>
<comment type="cofactor">
    <cofactor evidence="3">
        <name>FAD</name>
        <dbReference type="ChEBI" id="CHEBI:57692"/>
    </cofactor>
</comment>
<comment type="activity regulation">
    <text evidence="1">Enol-oxaloacetate inhibits the succinate dehydrogenase activity.</text>
</comment>
<comment type="pathway">
    <text evidence="2">Carbohydrate metabolism; tricarboxylic acid cycle; fumarate from succinate (eukaryal route): step 1/1.</text>
</comment>
<comment type="subunit">
    <text evidence="3">Component of complex II composed of four subunits: a flavoprotein (FP), an iron-sulfur protein (IP), and a cytochrome b composed of a large and a small subunit.</text>
</comment>
<comment type="subcellular location">
    <subcellularLocation>
        <location evidence="3">Mitochondrion inner membrane</location>
        <topology evidence="3">Peripheral membrane protein</topology>
        <orientation evidence="3">Matrix side</orientation>
    </subcellularLocation>
</comment>
<comment type="similarity">
    <text evidence="5">Belongs to the FAD-dependent oxidoreductase 2 family. FRD/SDH subfamily.</text>
</comment>
<keyword id="KW-0249">Electron transport</keyword>
<keyword id="KW-0274">FAD</keyword>
<keyword id="KW-0285">Flavoprotein</keyword>
<keyword id="KW-0472">Membrane</keyword>
<keyword id="KW-0496">Mitochondrion</keyword>
<keyword id="KW-0999">Mitochondrion inner membrane</keyword>
<keyword id="KW-0560">Oxidoreductase</keyword>
<keyword id="KW-1185">Reference proteome</keyword>
<keyword id="KW-0809">Transit peptide</keyword>
<keyword id="KW-0813">Transport</keyword>
<keyword id="KW-0816">Tricarboxylic acid cycle</keyword>